<evidence type="ECO:0000255" key="1">
    <source>
        <dbReference type="HAMAP-Rule" id="MF_00270"/>
    </source>
</evidence>
<evidence type="ECO:0000305" key="2"/>
<proteinExistence type="inferred from homology"/>
<accession>A9QYL4</accession>
<reference key="1">
    <citation type="journal article" date="2010" name="J. Bacteriol.">
        <title>Genome sequence of the deep-rooted Yersinia pestis strain Angola reveals new insights into the evolution and pangenome of the plague bacterium.</title>
        <authorList>
            <person name="Eppinger M."/>
            <person name="Worsham P.L."/>
            <person name="Nikolich M.P."/>
            <person name="Riley D.R."/>
            <person name="Sebastian Y."/>
            <person name="Mou S."/>
            <person name="Achtman M."/>
            <person name="Lindler L.E."/>
            <person name="Ravel J."/>
        </authorList>
    </citation>
    <scope>NUCLEOTIDE SEQUENCE [LARGE SCALE GENOMIC DNA]</scope>
    <source>
        <strain>Angola</strain>
    </source>
</reference>
<gene>
    <name evidence="1" type="primary">rpsR</name>
    <name type="ordered locus">YpAngola_A0682</name>
</gene>
<comment type="function">
    <text evidence="1">Binds as a heterodimer with protein bS6 to the central domain of the 16S rRNA, where it helps stabilize the platform of the 30S subunit.</text>
</comment>
<comment type="subunit">
    <text evidence="1">Part of the 30S ribosomal subunit. Forms a tight heterodimer with protein bS6.</text>
</comment>
<comment type="similarity">
    <text evidence="1">Belongs to the bacterial ribosomal protein bS18 family.</text>
</comment>
<feature type="chain" id="PRO_1000114471" description="Small ribosomal subunit protein bS18">
    <location>
        <begin position="1"/>
        <end position="75"/>
    </location>
</feature>
<keyword id="KW-0687">Ribonucleoprotein</keyword>
<keyword id="KW-0689">Ribosomal protein</keyword>
<keyword id="KW-0694">RNA-binding</keyword>
<keyword id="KW-0699">rRNA-binding</keyword>
<organism>
    <name type="scientific">Yersinia pestis bv. Antiqua (strain Angola)</name>
    <dbReference type="NCBI Taxonomy" id="349746"/>
    <lineage>
        <taxon>Bacteria</taxon>
        <taxon>Pseudomonadati</taxon>
        <taxon>Pseudomonadota</taxon>
        <taxon>Gammaproteobacteria</taxon>
        <taxon>Enterobacterales</taxon>
        <taxon>Yersiniaceae</taxon>
        <taxon>Yersinia</taxon>
    </lineage>
</organism>
<sequence length="75" mass="8989">MARYFRRRKFCRFTAEGVVEIDYKDIATLKNYITESGKIVPSRITGTRAKYQRQLARCIKRARYLSLLPYTDRHQ</sequence>
<protein>
    <recommendedName>
        <fullName evidence="1">Small ribosomal subunit protein bS18</fullName>
    </recommendedName>
    <alternativeName>
        <fullName evidence="2">30S ribosomal protein S18</fullName>
    </alternativeName>
</protein>
<dbReference type="EMBL" id="CP000901">
    <property type="protein sequence ID" value="ABX87183.1"/>
    <property type="molecule type" value="Genomic_DNA"/>
</dbReference>
<dbReference type="RefSeq" id="WP_002210155.1">
    <property type="nucleotide sequence ID" value="NZ_CP009935.1"/>
</dbReference>
<dbReference type="SMR" id="A9QYL4"/>
<dbReference type="GeneID" id="98391335"/>
<dbReference type="KEGG" id="ypg:YpAngola_A0682"/>
<dbReference type="PATRIC" id="fig|349746.12.peg.1629"/>
<dbReference type="GO" id="GO:0022627">
    <property type="term" value="C:cytosolic small ribosomal subunit"/>
    <property type="evidence" value="ECO:0007669"/>
    <property type="project" value="TreeGrafter"/>
</dbReference>
<dbReference type="GO" id="GO:0070181">
    <property type="term" value="F:small ribosomal subunit rRNA binding"/>
    <property type="evidence" value="ECO:0007669"/>
    <property type="project" value="TreeGrafter"/>
</dbReference>
<dbReference type="GO" id="GO:0003735">
    <property type="term" value="F:structural constituent of ribosome"/>
    <property type="evidence" value="ECO:0007669"/>
    <property type="project" value="InterPro"/>
</dbReference>
<dbReference type="GO" id="GO:0006412">
    <property type="term" value="P:translation"/>
    <property type="evidence" value="ECO:0007669"/>
    <property type="project" value="UniProtKB-UniRule"/>
</dbReference>
<dbReference type="FunFam" id="4.10.640.10:FF:000001">
    <property type="entry name" value="30S ribosomal protein S18"/>
    <property type="match status" value="1"/>
</dbReference>
<dbReference type="Gene3D" id="4.10.640.10">
    <property type="entry name" value="Ribosomal protein S18"/>
    <property type="match status" value="1"/>
</dbReference>
<dbReference type="HAMAP" id="MF_00270">
    <property type="entry name" value="Ribosomal_bS18"/>
    <property type="match status" value="1"/>
</dbReference>
<dbReference type="InterPro" id="IPR001648">
    <property type="entry name" value="Ribosomal_bS18"/>
</dbReference>
<dbReference type="InterPro" id="IPR018275">
    <property type="entry name" value="Ribosomal_bS18_CS"/>
</dbReference>
<dbReference type="InterPro" id="IPR036870">
    <property type="entry name" value="Ribosomal_bS18_sf"/>
</dbReference>
<dbReference type="NCBIfam" id="TIGR00165">
    <property type="entry name" value="S18"/>
    <property type="match status" value="1"/>
</dbReference>
<dbReference type="PANTHER" id="PTHR13479">
    <property type="entry name" value="30S RIBOSOMAL PROTEIN S18"/>
    <property type="match status" value="1"/>
</dbReference>
<dbReference type="PANTHER" id="PTHR13479:SF40">
    <property type="entry name" value="SMALL RIBOSOMAL SUBUNIT PROTEIN BS18M"/>
    <property type="match status" value="1"/>
</dbReference>
<dbReference type="Pfam" id="PF01084">
    <property type="entry name" value="Ribosomal_S18"/>
    <property type="match status" value="1"/>
</dbReference>
<dbReference type="PRINTS" id="PR00974">
    <property type="entry name" value="RIBOSOMALS18"/>
</dbReference>
<dbReference type="SUPFAM" id="SSF46911">
    <property type="entry name" value="Ribosomal protein S18"/>
    <property type="match status" value="1"/>
</dbReference>
<dbReference type="PROSITE" id="PS00057">
    <property type="entry name" value="RIBOSOMAL_S18"/>
    <property type="match status" value="1"/>
</dbReference>
<name>RS18_YERPG</name>